<reference key="1">
    <citation type="journal article" date="2010" name="Environ. Microbiol.">
        <title>The genome of Syntrophomonas wolfei: new insights into syntrophic metabolism and biohydrogen production.</title>
        <authorList>
            <person name="Sieber J.R."/>
            <person name="Sims D.R."/>
            <person name="Han C."/>
            <person name="Kim E."/>
            <person name="Lykidis A."/>
            <person name="Lapidus A.L."/>
            <person name="McDonnald E."/>
            <person name="Rohlin L."/>
            <person name="Culley D.E."/>
            <person name="Gunsalus R."/>
            <person name="McInerney M.J."/>
        </authorList>
    </citation>
    <scope>NUCLEOTIDE SEQUENCE [LARGE SCALE GENOMIC DNA]</scope>
    <source>
        <strain>DSM 2245B / Goettingen</strain>
    </source>
</reference>
<organism>
    <name type="scientific">Syntrophomonas wolfei subsp. wolfei (strain DSM 2245B / Goettingen)</name>
    <dbReference type="NCBI Taxonomy" id="335541"/>
    <lineage>
        <taxon>Bacteria</taxon>
        <taxon>Bacillati</taxon>
        <taxon>Bacillota</taxon>
        <taxon>Clostridia</taxon>
        <taxon>Eubacteriales</taxon>
        <taxon>Syntrophomonadaceae</taxon>
        <taxon>Syntrophomonas</taxon>
    </lineage>
</organism>
<protein>
    <recommendedName>
        <fullName evidence="1">Large ribosomal subunit protein uL11</fullName>
    </recommendedName>
    <alternativeName>
        <fullName evidence="2">50S ribosomal protein L11</fullName>
    </alternativeName>
</protein>
<name>RL11_SYNWW</name>
<sequence>MARKVLGKISLQIAAGKATPAPPVGPALGQYGVNIMGFCKEYNARTANQAGYIVPVEITVFEDRSFTFVIKSPPASDLLKKAANIDKGSGEPNKKKIGKVPRAKLLEIAETKKEDLNASDIEAAVKMIEGTARSMGLEIVD</sequence>
<accession>Q0AUG7</accession>
<keyword id="KW-0488">Methylation</keyword>
<keyword id="KW-1185">Reference proteome</keyword>
<keyword id="KW-0687">Ribonucleoprotein</keyword>
<keyword id="KW-0689">Ribosomal protein</keyword>
<keyword id="KW-0694">RNA-binding</keyword>
<keyword id="KW-0699">rRNA-binding</keyword>
<gene>
    <name evidence="1" type="primary">rplK</name>
    <name type="ordered locus">Swol_2346</name>
</gene>
<comment type="function">
    <text evidence="1">Forms part of the ribosomal stalk which helps the ribosome interact with GTP-bound translation factors.</text>
</comment>
<comment type="subunit">
    <text evidence="1">Part of the ribosomal stalk of the 50S ribosomal subunit. Interacts with L10 and the large rRNA to form the base of the stalk. L10 forms an elongated spine to which L12 dimers bind in a sequential fashion forming a multimeric L10(L12)X complex.</text>
</comment>
<comment type="PTM">
    <text evidence="1">One or more lysine residues are methylated.</text>
</comment>
<comment type="similarity">
    <text evidence="1">Belongs to the universal ribosomal protein uL11 family.</text>
</comment>
<evidence type="ECO:0000255" key="1">
    <source>
        <dbReference type="HAMAP-Rule" id="MF_00736"/>
    </source>
</evidence>
<evidence type="ECO:0000305" key="2"/>
<feature type="chain" id="PRO_1000046285" description="Large ribosomal subunit protein uL11">
    <location>
        <begin position="1"/>
        <end position="141"/>
    </location>
</feature>
<proteinExistence type="inferred from homology"/>
<dbReference type="EMBL" id="CP000448">
    <property type="protein sequence ID" value="ABI69637.1"/>
    <property type="molecule type" value="Genomic_DNA"/>
</dbReference>
<dbReference type="RefSeq" id="WP_011641721.1">
    <property type="nucleotide sequence ID" value="NC_008346.1"/>
</dbReference>
<dbReference type="SMR" id="Q0AUG7"/>
<dbReference type="STRING" id="335541.Swol_2346"/>
<dbReference type="KEGG" id="swo:Swol_2346"/>
<dbReference type="eggNOG" id="COG0080">
    <property type="taxonomic scope" value="Bacteria"/>
</dbReference>
<dbReference type="HOGENOM" id="CLU_074237_2_2_9"/>
<dbReference type="OrthoDB" id="9802408at2"/>
<dbReference type="Proteomes" id="UP000001968">
    <property type="component" value="Chromosome"/>
</dbReference>
<dbReference type="GO" id="GO:0022625">
    <property type="term" value="C:cytosolic large ribosomal subunit"/>
    <property type="evidence" value="ECO:0007669"/>
    <property type="project" value="TreeGrafter"/>
</dbReference>
<dbReference type="GO" id="GO:0070180">
    <property type="term" value="F:large ribosomal subunit rRNA binding"/>
    <property type="evidence" value="ECO:0007669"/>
    <property type="project" value="UniProtKB-UniRule"/>
</dbReference>
<dbReference type="GO" id="GO:0003735">
    <property type="term" value="F:structural constituent of ribosome"/>
    <property type="evidence" value="ECO:0007669"/>
    <property type="project" value="InterPro"/>
</dbReference>
<dbReference type="GO" id="GO:0006412">
    <property type="term" value="P:translation"/>
    <property type="evidence" value="ECO:0007669"/>
    <property type="project" value="UniProtKB-UniRule"/>
</dbReference>
<dbReference type="CDD" id="cd00349">
    <property type="entry name" value="Ribosomal_L11"/>
    <property type="match status" value="1"/>
</dbReference>
<dbReference type="FunFam" id="1.10.10.250:FF:000001">
    <property type="entry name" value="50S ribosomal protein L11"/>
    <property type="match status" value="1"/>
</dbReference>
<dbReference type="FunFam" id="3.30.1550.10:FF:000001">
    <property type="entry name" value="50S ribosomal protein L11"/>
    <property type="match status" value="1"/>
</dbReference>
<dbReference type="Gene3D" id="1.10.10.250">
    <property type="entry name" value="Ribosomal protein L11, C-terminal domain"/>
    <property type="match status" value="1"/>
</dbReference>
<dbReference type="Gene3D" id="3.30.1550.10">
    <property type="entry name" value="Ribosomal protein L11/L12, N-terminal domain"/>
    <property type="match status" value="1"/>
</dbReference>
<dbReference type="HAMAP" id="MF_00736">
    <property type="entry name" value="Ribosomal_uL11"/>
    <property type="match status" value="1"/>
</dbReference>
<dbReference type="InterPro" id="IPR000911">
    <property type="entry name" value="Ribosomal_uL11"/>
</dbReference>
<dbReference type="InterPro" id="IPR006519">
    <property type="entry name" value="Ribosomal_uL11_bac-typ"/>
</dbReference>
<dbReference type="InterPro" id="IPR020783">
    <property type="entry name" value="Ribosomal_uL11_C"/>
</dbReference>
<dbReference type="InterPro" id="IPR036769">
    <property type="entry name" value="Ribosomal_uL11_C_sf"/>
</dbReference>
<dbReference type="InterPro" id="IPR020785">
    <property type="entry name" value="Ribosomal_uL11_CS"/>
</dbReference>
<dbReference type="InterPro" id="IPR020784">
    <property type="entry name" value="Ribosomal_uL11_N"/>
</dbReference>
<dbReference type="InterPro" id="IPR036796">
    <property type="entry name" value="Ribosomal_uL11_N_sf"/>
</dbReference>
<dbReference type="NCBIfam" id="TIGR01632">
    <property type="entry name" value="L11_bact"/>
    <property type="match status" value="1"/>
</dbReference>
<dbReference type="PANTHER" id="PTHR11661">
    <property type="entry name" value="60S RIBOSOMAL PROTEIN L12"/>
    <property type="match status" value="1"/>
</dbReference>
<dbReference type="PANTHER" id="PTHR11661:SF1">
    <property type="entry name" value="LARGE RIBOSOMAL SUBUNIT PROTEIN UL11M"/>
    <property type="match status" value="1"/>
</dbReference>
<dbReference type="Pfam" id="PF00298">
    <property type="entry name" value="Ribosomal_L11"/>
    <property type="match status" value="1"/>
</dbReference>
<dbReference type="Pfam" id="PF03946">
    <property type="entry name" value="Ribosomal_L11_N"/>
    <property type="match status" value="1"/>
</dbReference>
<dbReference type="SMART" id="SM00649">
    <property type="entry name" value="RL11"/>
    <property type="match status" value="1"/>
</dbReference>
<dbReference type="SUPFAM" id="SSF54747">
    <property type="entry name" value="Ribosomal L11/L12e N-terminal domain"/>
    <property type="match status" value="1"/>
</dbReference>
<dbReference type="SUPFAM" id="SSF46906">
    <property type="entry name" value="Ribosomal protein L11, C-terminal domain"/>
    <property type="match status" value="1"/>
</dbReference>
<dbReference type="PROSITE" id="PS00359">
    <property type="entry name" value="RIBOSOMAL_L11"/>
    <property type="match status" value="1"/>
</dbReference>